<sequence length="539" mass="61707">MLVFRRNYAKRNTGSKFKILPEYKLKCGLEIHTQLNTDNKLFSMSTNSPFADVDKPNYHTSYFDVSIPGTQPILNLQAVLFALKLSLALRCKVSLNSHFDRKHYFYGDQPLGYQITQHYNPFSSKGKLRLYKDLDSIEEAFKDISVIQLQIEQDTGKSVYNSTDSNTKIDLNRSNVPLIEMVTEPDFTDLKQIRAFIKKYQNLVRHLKISTGDLETGAMRVDVNLSINDYARVELKNLPNTSSITNAIKYEYNRQVNMIEKGEGDQLKHTETRGWTGSETVKLRTKESIIDYRYMPDPELPNILLTNEIVEGVEKTIPTLPDDTCMMLMQEPYGLTLKDAKILTINSNGHDDLYSHDELRACYFSTFDAYHSLCKKQNEEFVRKLPANWIIHELLGNLNKMEIPLIKVSHILPPEKFAELLLLISKKTISNASGKLLLSHILNSFKENSFVASEPINFNALIEEFELHAVSDVGSEELELICESIITELNNNKMIEDIKSGKKKNSIKFLVGQAMRISQGRIQAQEFEITFKRLLGVEP</sequence>
<keyword id="KW-0067">ATP-binding</keyword>
<keyword id="KW-0436">Ligase</keyword>
<keyword id="KW-0496">Mitochondrion</keyword>
<keyword id="KW-0547">Nucleotide-binding</keyword>
<keyword id="KW-0648">Protein biosynthesis</keyword>
<keyword id="KW-1185">Reference proteome</keyword>
<dbReference type="EC" id="6.3.5.-" evidence="1"/>
<dbReference type="EMBL" id="CR382125">
    <property type="protein sequence ID" value="CAG99971.1"/>
    <property type="molecule type" value="Genomic_DNA"/>
</dbReference>
<dbReference type="RefSeq" id="XP_454884.1">
    <property type="nucleotide sequence ID" value="XM_454884.1"/>
</dbReference>
<dbReference type="SMR" id="Q6CMF5"/>
<dbReference type="FunCoup" id="Q6CMF5">
    <property type="interactions" value="393"/>
</dbReference>
<dbReference type="STRING" id="284590.Q6CMF5"/>
<dbReference type="PaxDb" id="284590-Q6CMF5"/>
<dbReference type="KEGG" id="kla:KLLA0_E20659g"/>
<dbReference type="eggNOG" id="KOG2438">
    <property type="taxonomic scope" value="Eukaryota"/>
</dbReference>
<dbReference type="HOGENOM" id="CLU_019240_4_0_1"/>
<dbReference type="InParanoid" id="Q6CMF5"/>
<dbReference type="OMA" id="ARKWWMG"/>
<dbReference type="Proteomes" id="UP000000598">
    <property type="component" value="Chromosome E"/>
</dbReference>
<dbReference type="GO" id="GO:0030956">
    <property type="term" value="C:glutamyl-tRNA(Gln) amidotransferase complex"/>
    <property type="evidence" value="ECO:0007669"/>
    <property type="project" value="UniProtKB-UniRule"/>
</dbReference>
<dbReference type="GO" id="GO:0005739">
    <property type="term" value="C:mitochondrion"/>
    <property type="evidence" value="ECO:0007669"/>
    <property type="project" value="UniProtKB-SubCell"/>
</dbReference>
<dbReference type="GO" id="GO:0005524">
    <property type="term" value="F:ATP binding"/>
    <property type="evidence" value="ECO:0007669"/>
    <property type="project" value="UniProtKB-KW"/>
</dbReference>
<dbReference type="GO" id="GO:0050567">
    <property type="term" value="F:glutaminyl-tRNA synthase (glutamine-hydrolyzing) activity"/>
    <property type="evidence" value="ECO:0007669"/>
    <property type="project" value="UniProtKB-UniRule"/>
</dbReference>
<dbReference type="GO" id="GO:0070681">
    <property type="term" value="P:glutaminyl-tRNAGln biosynthesis via transamidation"/>
    <property type="evidence" value="ECO:0007669"/>
    <property type="project" value="UniProtKB-UniRule"/>
</dbReference>
<dbReference type="GO" id="GO:0032543">
    <property type="term" value="P:mitochondrial translation"/>
    <property type="evidence" value="ECO:0007669"/>
    <property type="project" value="UniProtKB-UniRule"/>
</dbReference>
<dbReference type="Gene3D" id="1.10.10.410">
    <property type="match status" value="1"/>
</dbReference>
<dbReference type="HAMAP" id="MF_00121">
    <property type="entry name" value="GatB"/>
    <property type="match status" value="1"/>
</dbReference>
<dbReference type="InterPro" id="IPR017959">
    <property type="entry name" value="Asn/Gln-tRNA_amidoTrfase_suB/E"/>
</dbReference>
<dbReference type="InterPro" id="IPR006075">
    <property type="entry name" value="Asn/Gln-tRNA_Trfase_suB/E_cat"/>
</dbReference>
<dbReference type="InterPro" id="IPR018027">
    <property type="entry name" value="Asn/Gln_amidotransferase"/>
</dbReference>
<dbReference type="InterPro" id="IPR003789">
    <property type="entry name" value="Asn/Gln_tRNA_amidoTrase-B-like"/>
</dbReference>
<dbReference type="InterPro" id="IPR004413">
    <property type="entry name" value="GatB"/>
</dbReference>
<dbReference type="InterPro" id="IPR023168">
    <property type="entry name" value="GatB_Yqey_C_2"/>
</dbReference>
<dbReference type="InterPro" id="IPR017958">
    <property type="entry name" value="Gln-tRNA_amidoTrfase_suB_CS"/>
</dbReference>
<dbReference type="InterPro" id="IPR014746">
    <property type="entry name" value="Gln_synth/guanido_kin_cat_dom"/>
</dbReference>
<dbReference type="NCBIfam" id="TIGR00133">
    <property type="entry name" value="gatB"/>
    <property type="match status" value="1"/>
</dbReference>
<dbReference type="NCBIfam" id="NF004012">
    <property type="entry name" value="PRK05477.1-2"/>
    <property type="match status" value="1"/>
</dbReference>
<dbReference type="PANTHER" id="PTHR11659">
    <property type="entry name" value="GLUTAMYL-TRNA GLN AMIDOTRANSFERASE SUBUNIT B MITOCHONDRIAL AND PROKARYOTIC PET112-RELATED"/>
    <property type="match status" value="1"/>
</dbReference>
<dbReference type="PANTHER" id="PTHR11659:SF0">
    <property type="entry name" value="GLUTAMYL-TRNA(GLN) AMIDOTRANSFERASE SUBUNIT B, MITOCHONDRIAL"/>
    <property type="match status" value="1"/>
</dbReference>
<dbReference type="Pfam" id="PF02934">
    <property type="entry name" value="GatB_N"/>
    <property type="match status" value="1"/>
</dbReference>
<dbReference type="Pfam" id="PF02637">
    <property type="entry name" value="GatB_Yqey"/>
    <property type="match status" value="1"/>
</dbReference>
<dbReference type="SMART" id="SM00845">
    <property type="entry name" value="GatB_Yqey"/>
    <property type="match status" value="1"/>
</dbReference>
<dbReference type="SUPFAM" id="SSF89095">
    <property type="entry name" value="GatB/YqeY motif"/>
    <property type="match status" value="1"/>
</dbReference>
<dbReference type="SUPFAM" id="SSF55931">
    <property type="entry name" value="Glutamine synthetase/guanido kinase"/>
    <property type="match status" value="1"/>
</dbReference>
<dbReference type="PROSITE" id="PS01234">
    <property type="entry name" value="GATB"/>
    <property type="match status" value="1"/>
</dbReference>
<accession>Q6CMF5</accession>
<organism>
    <name type="scientific">Kluyveromyces lactis (strain ATCC 8585 / CBS 2359 / DSM 70799 / NBRC 1267 / NRRL Y-1140 / WM37)</name>
    <name type="common">Yeast</name>
    <name type="synonym">Candida sphaerica</name>
    <dbReference type="NCBI Taxonomy" id="284590"/>
    <lineage>
        <taxon>Eukaryota</taxon>
        <taxon>Fungi</taxon>
        <taxon>Dikarya</taxon>
        <taxon>Ascomycota</taxon>
        <taxon>Saccharomycotina</taxon>
        <taxon>Saccharomycetes</taxon>
        <taxon>Saccharomycetales</taxon>
        <taxon>Saccharomycetaceae</taxon>
        <taxon>Kluyveromyces</taxon>
    </lineage>
</organism>
<comment type="function">
    <text evidence="1">Allows the formation of correctly charged Gln-tRNA(Gln) through the transamidation of misacylated Glu-tRNA(Gln) in the mitochondria. The reaction takes place in the presence of glutamine and ATP through an activated gamma-phospho-Glu-tRNA(Gln).</text>
</comment>
<comment type="catalytic activity">
    <reaction evidence="1">
        <text>L-glutamyl-tRNA(Gln) + L-glutamine + ATP + H2O = L-glutaminyl-tRNA(Gln) + L-glutamate + ADP + phosphate + H(+)</text>
        <dbReference type="Rhea" id="RHEA:17521"/>
        <dbReference type="Rhea" id="RHEA-COMP:9681"/>
        <dbReference type="Rhea" id="RHEA-COMP:9684"/>
        <dbReference type="ChEBI" id="CHEBI:15377"/>
        <dbReference type="ChEBI" id="CHEBI:15378"/>
        <dbReference type="ChEBI" id="CHEBI:29985"/>
        <dbReference type="ChEBI" id="CHEBI:30616"/>
        <dbReference type="ChEBI" id="CHEBI:43474"/>
        <dbReference type="ChEBI" id="CHEBI:58359"/>
        <dbReference type="ChEBI" id="CHEBI:78520"/>
        <dbReference type="ChEBI" id="CHEBI:78521"/>
        <dbReference type="ChEBI" id="CHEBI:456216"/>
    </reaction>
</comment>
<comment type="subunit">
    <text evidence="1">Subunit of the heterotrimeric GatFAB amidotransferase (AdT) complex, composed of A, B and F subunits.</text>
</comment>
<comment type="subcellular location">
    <subcellularLocation>
        <location evidence="1">Mitochondrion</location>
    </subcellularLocation>
</comment>
<comment type="miscellaneous">
    <text evidence="1">This protein may be expected to contain an N-terminal transit peptide but none has been predicted.</text>
</comment>
<comment type="similarity">
    <text evidence="1">Belongs to the GatB/GatE family. GatB subfamily.</text>
</comment>
<name>GATB_KLULA</name>
<feature type="chain" id="PRO_0000413257" description="Glutamyl-tRNA(Gln) amidotransferase subunit B, mitochondrial">
    <location>
        <begin position="1"/>
        <end position="539"/>
    </location>
</feature>
<protein>
    <recommendedName>
        <fullName evidence="1">Glutamyl-tRNA(Gln) amidotransferase subunit B, mitochondrial</fullName>
        <shortName evidence="1">Glu-AdT subunit B</shortName>
        <ecNumber evidence="1">6.3.5.-</ecNumber>
    </recommendedName>
</protein>
<reference key="1">
    <citation type="journal article" date="2004" name="Nature">
        <title>Genome evolution in yeasts.</title>
        <authorList>
            <person name="Dujon B."/>
            <person name="Sherman D."/>
            <person name="Fischer G."/>
            <person name="Durrens P."/>
            <person name="Casaregola S."/>
            <person name="Lafontaine I."/>
            <person name="de Montigny J."/>
            <person name="Marck C."/>
            <person name="Neuveglise C."/>
            <person name="Talla E."/>
            <person name="Goffard N."/>
            <person name="Frangeul L."/>
            <person name="Aigle M."/>
            <person name="Anthouard V."/>
            <person name="Babour A."/>
            <person name="Barbe V."/>
            <person name="Barnay S."/>
            <person name="Blanchin S."/>
            <person name="Beckerich J.-M."/>
            <person name="Beyne E."/>
            <person name="Bleykasten C."/>
            <person name="Boisrame A."/>
            <person name="Boyer J."/>
            <person name="Cattolico L."/>
            <person name="Confanioleri F."/>
            <person name="de Daruvar A."/>
            <person name="Despons L."/>
            <person name="Fabre E."/>
            <person name="Fairhead C."/>
            <person name="Ferry-Dumazet H."/>
            <person name="Groppi A."/>
            <person name="Hantraye F."/>
            <person name="Hennequin C."/>
            <person name="Jauniaux N."/>
            <person name="Joyet P."/>
            <person name="Kachouri R."/>
            <person name="Kerrest A."/>
            <person name="Koszul R."/>
            <person name="Lemaire M."/>
            <person name="Lesur I."/>
            <person name="Ma L."/>
            <person name="Muller H."/>
            <person name="Nicaud J.-M."/>
            <person name="Nikolski M."/>
            <person name="Oztas S."/>
            <person name="Ozier-Kalogeropoulos O."/>
            <person name="Pellenz S."/>
            <person name="Potier S."/>
            <person name="Richard G.-F."/>
            <person name="Straub M.-L."/>
            <person name="Suleau A."/>
            <person name="Swennen D."/>
            <person name="Tekaia F."/>
            <person name="Wesolowski-Louvel M."/>
            <person name="Westhof E."/>
            <person name="Wirth B."/>
            <person name="Zeniou-Meyer M."/>
            <person name="Zivanovic Y."/>
            <person name="Bolotin-Fukuhara M."/>
            <person name="Thierry A."/>
            <person name="Bouchier C."/>
            <person name="Caudron B."/>
            <person name="Scarpelli C."/>
            <person name="Gaillardin C."/>
            <person name="Weissenbach J."/>
            <person name="Wincker P."/>
            <person name="Souciet J.-L."/>
        </authorList>
    </citation>
    <scope>NUCLEOTIDE SEQUENCE [LARGE SCALE GENOMIC DNA]</scope>
    <source>
        <strain>ATCC 8585 / CBS 2359 / DSM 70799 / NBRC 1267 / NRRL Y-1140 / WM37</strain>
    </source>
</reference>
<evidence type="ECO:0000255" key="1">
    <source>
        <dbReference type="HAMAP-Rule" id="MF_03147"/>
    </source>
</evidence>
<gene>
    <name evidence="1" type="primary">PET112</name>
    <name type="ordered locus">KLLA0E20659g</name>
</gene>
<proteinExistence type="inferred from homology"/>